<accession>A6QLY7</accession>
<accession>Q0V8Q4</accession>
<feature type="chain" id="PRO_0000306114" description="Pre-B-cell leukemia transcription factor-interacting protein 1">
    <location>
        <begin position="1"/>
        <end position="727"/>
    </location>
</feature>
<feature type="region of interest" description="Disordered" evidence="5">
    <location>
        <begin position="1"/>
        <end position="135"/>
    </location>
</feature>
<feature type="region of interest" description="Disordered" evidence="5">
    <location>
        <begin position="491"/>
        <end position="568"/>
    </location>
</feature>
<feature type="region of interest" description="Disordered" evidence="5">
    <location>
        <begin position="701"/>
        <end position="727"/>
    </location>
</feature>
<feature type="coiled-coil region" evidence="4">
    <location>
        <begin position="269"/>
        <end position="353"/>
    </location>
</feature>
<feature type="coiled-coil region" evidence="4">
    <location>
        <begin position="380"/>
        <end position="421"/>
    </location>
</feature>
<feature type="short sequence motif" description="Nuclear localization signal" evidence="1">
    <location>
        <begin position="488"/>
        <end position="506"/>
    </location>
</feature>
<feature type="short sequence motif" description="Nuclear localization signal" evidence="1">
    <location>
        <begin position="696"/>
        <end position="719"/>
    </location>
</feature>
<feature type="compositionally biased region" description="Polar residues" evidence="5">
    <location>
        <begin position="1"/>
        <end position="10"/>
    </location>
</feature>
<feature type="compositionally biased region" description="Low complexity" evidence="5">
    <location>
        <begin position="39"/>
        <end position="53"/>
    </location>
</feature>
<feature type="compositionally biased region" description="Polar residues" evidence="5">
    <location>
        <begin position="61"/>
        <end position="70"/>
    </location>
</feature>
<feature type="compositionally biased region" description="Basic and acidic residues" evidence="5">
    <location>
        <begin position="498"/>
        <end position="544"/>
    </location>
</feature>
<feature type="compositionally biased region" description="Basic and acidic residues" evidence="5">
    <location>
        <begin position="551"/>
        <end position="568"/>
    </location>
</feature>
<feature type="compositionally biased region" description="Basic and acidic residues" evidence="5">
    <location>
        <begin position="716"/>
        <end position="727"/>
    </location>
</feature>
<feature type="modified residue" description="Phosphoserine" evidence="3">
    <location>
        <position position="43"/>
    </location>
</feature>
<feature type="modified residue" description="Phosphoserine" evidence="3">
    <location>
        <position position="130"/>
    </location>
</feature>
<feature type="modified residue" description="Phosphoserine" evidence="2">
    <location>
        <position position="134"/>
    </location>
</feature>
<feature type="modified residue" description="Phosphoserine" evidence="3">
    <location>
        <position position="147"/>
    </location>
</feature>
<feature type="modified residue" description="Phosphoserine" evidence="3">
    <location>
        <position position="148"/>
    </location>
</feature>
<feature type="modified residue" description="Phosphoserine" evidence="3">
    <location>
        <position position="149"/>
    </location>
</feature>
<feature type="modified residue" description="Phosphothreonine" evidence="3">
    <location>
        <position position="153"/>
    </location>
</feature>
<feature type="sequence conflict" description="In Ref. 1; ABG67003." evidence="6" ref="1">
    <location>
        <position position="82"/>
    </location>
</feature>
<reference key="1">
    <citation type="journal article" date="2005" name="BMC Genomics">
        <title>Characterization of 954 bovine full-CDS cDNA sequences.</title>
        <authorList>
            <person name="Harhay G.P."/>
            <person name="Sonstegard T.S."/>
            <person name="Keele J.W."/>
            <person name="Heaton M.P."/>
            <person name="Clawson M.L."/>
            <person name="Snelling W.M."/>
            <person name="Wiedmann R.T."/>
            <person name="Van Tassell C.P."/>
            <person name="Smith T.P.L."/>
        </authorList>
    </citation>
    <scope>NUCLEOTIDE SEQUENCE [LARGE SCALE MRNA]</scope>
</reference>
<reference key="2">
    <citation type="submission" date="2007-06" db="EMBL/GenBank/DDBJ databases">
        <authorList>
            <consortium name="NIH - Mammalian Gene Collection (MGC) project"/>
        </authorList>
    </citation>
    <scope>NUCLEOTIDE SEQUENCE [LARGE SCALE MRNA]</scope>
    <source>
        <strain>Hereford</strain>
        <tissue>Fetal spinal cord</tissue>
    </source>
</reference>
<protein>
    <recommendedName>
        <fullName>Pre-B-cell leukemia transcription factor-interacting protein 1</fullName>
    </recommendedName>
    <alternativeName>
        <fullName>Hematopoietic PBX-interacting protein</fullName>
    </alternativeName>
</protein>
<evidence type="ECO:0000250" key="1"/>
<evidence type="ECO:0000250" key="2">
    <source>
        <dbReference type="UniProtKB" id="A2VD12"/>
    </source>
</evidence>
<evidence type="ECO:0000250" key="3">
    <source>
        <dbReference type="UniProtKB" id="Q96AQ6"/>
    </source>
</evidence>
<evidence type="ECO:0000255" key="4"/>
<evidence type="ECO:0000256" key="5">
    <source>
        <dbReference type="SAM" id="MobiDB-lite"/>
    </source>
</evidence>
<evidence type="ECO:0000305" key="6"/>
<gene>
    <name type="primary">PBXIP1</name>
    <name type="synonym">HPIP</name>
</gene>
<organism>
    <name type="scientific">Bos taurus</name>
    <name type="common">Bovine</name>
    <dbReference type="NCBI Taxonomy" id="9913"/>
    <lineage>
        <taxon>Eukaryota</taxon>
        <taxon>Metazoa</taxon>
        <taxon>Chordata</taxon>
        <taxon>Craniata</taxon>
        <taxon>Vertebrata</taxon>
        <taxon>Euteleostomi</taxon>
        <taxon>Mammalia</taxon>
        <taxon>Eutheria</taxon>
        <taxon>Laurasiatheria</taxon>
        <taxon>Artiodactyla</taxon>
        <taxon>Ruminantia</taxon>
        <taxon>Pecora</taxon>
        <taxon>Bovidae</taxon>
        <taxon>Bovinae</taxon>
        <taxon>Bos</taxon>
    </lineage>
</organism>
<sequence length="727" mass="80258">MASCPDSDNSWVLAGSESLPVETLGPESGNDPESERAPRAPQSPSRAAAEESAGTLDGGETVSQNESSKSGPILSEEAEAKQGVLEGDDPGVESPGPGDTEAQGDLEETPEVVGLEPDSQDLEDQSPHRSLPSSPKTAWIREEAHHSSSDDDTDVDVEGLRRRRGREPGTPQPAATLGVEDQVQGEGAGGQLGISLNMCLLGSLVLLGLGVLLFGGLSESESGPLEEVDLQVLPDVESDTEMLEAVGDGQDGLQQLQTSEVLDSVPSLQNMALLLDKLAKENQDIRLLQAQLQAQKEELQSLMRQPKGLEEENARLRGALQQGEASQRALESELQQLRAQLQGLEADCVQGADGLCLQWGRGPQAGQVTKEQGPTGQEPSPGFLEQKKQLEAEAQALRQELERQRRLLGSVQQDLERSLKEAGRGDPARAGLAELGHRLAQKLRGLENWGQHPGVPANVSEAWHQKPHFQNSREPSGKEKWWDRQGDWKTEHWKHKKEASGREKSWRGEEDRELVGRRKEGKPRVEEWAGKKDGKQQRSKEPPRKSGRPHPSGERQKHPRWKEGAKDRHDPLPLWAELSRHKYQAPQGCSGVHECARQEGLAFFGIELAPVRQQELASLLRTYLARLPWAGPLTEELPLSPAYFGEDGIFRHDRLRFRDFVDALEDQLEEVAVRQTGDDDAVDDFEDFIFSHFFGDKALKKRSGKKDKHLQNRVVGPREEHSPHRQG</sequence>
<comment type="function">
    <text evidence="1">Regulator of pre-B-cell leukemia transcription factors (BPXs) function. Inhibits the binding of PBX1-HOX complex to DNA and blocks the transcriptional activity of E2A-PBX1. Tethers estrogen receptor-alpha (ESR1) to microtubules and allows them to influence estrogen receptors-alpha signaling (By similarity).</text>
</comment>
<comment type="subunit">
    <text evidence="1">Interacts with ESR1, PBX1, PBX2 and PBX3. Interacts with TEX11 (By similarity).</text>
</comment>
<comment type="subcellular location">
    <subcellularLocation>
        <location evidence="3">Cytoplasm</location>
        <location evidence="3">Cytoskeleton</location>
    </subcellularLocation>
    <subcellularLocation>
        <location evidence="3">Nucleus</location>
    </subcellularLocation>
    <text evidence="3">Shuttles between the nucleus and the cytosol. Mainly localized in the cytoplasm, associated with microtubules. Detected in small amounts in the nucleus.</text>
</comment>
<comment type="domain">
    <text evidence="1">The C-terminal domain (AA 443-731) contains a nuclear export signal.</text>
</comment>
<comment type="domain">
    <text evidence="1">Association to the cytoskeleton through a N-terminal leucine rich-domain (AA 190-218).</text>
</comment>
<proteinExistence type="evidence at transcript level"/>
<keyword id="KW-0175">Coiled coil</keyword>
<keyword id="KW-0963">Cytoplasm</keyword>
<keyword id="KW-0206">Cytoskeleton</keyword>
<keyword id="KW-0493">Microtubule</keyword>
<keyword id="KW-0539">Nucleus</keyword>
<keyword id="KW-0597">Phosphoprotein</keyword>
<keyword id="KW-1185">Reference proteome</keyword>
<dbReference type="EMBL" id="BT026164">
    <property type="protein sequence ID" value="ABG67003.1"/>
    <property type="molecule type" value="mRNA"/>
</dbReference>
<dbReference type="EMBL" id="BC148133">
    <property type="protein sequence ID" value="AAI48134.1"/>
    <property type="molecule type" value="mRNA"/>
</dbReference>
<dbReference type="RefSeq" id="NP_001068733.1">
    <property type="nucleotide sequence ID" value="NM_001075265.1"/>
</dbReference>
<dbReference type="RefSeq" id="XP_024842212.1">
    <property type="nucleotide sequence ID" value="XM_024986444.2"/>
</dbReference>
<dbReference type="RefSeq" id="XP_059738718.1">
    <property type="nucleotide sequence ID" value="XM_059882735.1"/>
</dbReference>
<dbReference type="SMR" id="A6QLY7"/>
<dbReference type="BioGRID" id="163129">
    <property type="interactions" value="1"/>
</dbReference>
<dbReference type="FunCoup" id="A6QLY7">
    <property type="interactions" value="315"/>
</dbReference>
<dbReference type="STRING" id="9913.ENSBTAP00000063868"/>
<dbReference type="PaxDb" id="9913-ENSBTAP00000005980"/>
<dbReference type="Ensembl" id="ENSBTAT00000120515.1">
    <property type="protein sequence ID" value="ENSBTAP00000089237.1"/>
    <property type="gene ID" value="ENSBTAG00000004552.7"/>
</dbReference>
<dbReference type="GeneID" id="506485"/>
<dbReference type="KEGG" id="bta:506485"/>
<dbReference type="CTD" id="57326"/>
<dbReference type="VGNC" id="VGNC:32611">
    <property type="gene designation" value="PBXIP1"/>
</dbReference>
<dbReference type="eggNOG" id="ENOG502QRIW">
    <property type="taxonomic scope" value="Eukaryota"/>
</dbReference>
<dbReference type="GeneTree" id="ENSGT00940000162147"/>
<dbReference type="HOGENOM" id="CLU_024505_0_0_1"/>
<dbReference type="InParanoid" id="A6QLY7"/>
<dbReference type="OrthoDB" id="8947092at2759"/>
<dbReference type="TreeFam" id="TF333202"/>
<dbReference type="Proteomes" id="UP000009136">
    <property type="component" value="Chromosome 3"/>
</dbReference>
<dbReference type="GO" id="GO:0005737">
    <property type="term" value="C:cytoplasm"/>
    <property type="evidence" value="ECO:0007669"/>
    <property type="project" value="UniProtKB-KW"/>
</dbReference>
<dbReference type="GO" id="GO:0005874">
    <property type="term" value="C:microtubule"/>
    <property type="evidence" value="ECO:0007669"/>
    <property type="project" value="UniProtKB-KW"/>
</dbReference>
<dbReference type="GO" id="GO:0005634">
    <property type="term" value="C:nucleus"/>
    <property type="evidence" value="ECO:0000318"/>
    <property type="project" value="GO_Central"/>
</dbReference>
<dbReference type="GO" id="GO:0003712">
    <property type="term" value="F:transcription coregulator activity"/>
    <property type="evidence" value="ECO:0000318"/>
    <property type="project" value="GO_Central"/>
</dbReference>
<dbReference type="GO" id="GO:0006355">
    <property type="term" value="P:regulation of DNA-templated transcription"/>
    <property type="evidence" value="ECO:0000318"/>
    <property type="project" value="GO_Central"/>
</dbReference>
<dbReference type="InterPro" id="IPR051990">
    <property type="entry name" value="CCPG1/PBIP1"/>
</dbReference>
<dbReference type="PANTHER" id="PTHR28638">
    <property type="entry name" value="CELL CYCLE PROGRESSION PROTEIN 1"/>
    <property type="match status" value="1"/>
</dbReference>
<dbReference type="PANTHER" id="PTHR28638:SF1">
    <property type="entry name" value="PRE-B-CELL LEUKEMIA TRANSCRIPTION FACTOR-INTERACTING PROTEIN 1"/>
    <property type="match status" value="1"/>
</dbReference>
<name>PBIP1_BOVIN</name>